<comment type="function">
    <text evidence="1 5 6 8 9 10 12">Secretory calcium-dependent phospholipase A2 that primarily targets extracellular phospholipids (PubMed:12021277, PubMed:9188469). Hydrolyzes the ester bond of the fatty acyl group attached at sn-2 position of phospholipids with preference for phosphatidylcholines and phosphatidylglycerols over phosphatidylethanolamines. Preferentially releases sn-2 omega-6 and omega-3 polyunsaturated fatty acyl (PUFA) chains over saturated fatty acyls (PubMed:12021277, PubMed:12359733). Contributes to phospholipid remodeling of very low-density lipoprotein (VLDL), low-density lipoprotein (LDL) and high-density lipoprotein (HDL) particles (PubMed:12021277). Hydrolyzes LDL phospholipids releasing unsaturated fatty acids that regulate macrophage differentiation toward foam cells (PubMed:12021277). Efficiently hydrolyzes and inactivates platelet activating factor (PAF), a potent lipid mediator present in oxidized LDL (PubMed:16962371). May act in an autocrine and paracrine manner. Secreted by lung epithelium, targets membrane phospholipids of infiltrating eosinophils, releasing arachidonate and boosting eicosanoid and cysteinyl leukotriene synthesis involved in airway inflammatory response (By similarity). Secreted by gut epithelium, hydrolyzes dietary and biliary phosphatidylcholines in the gastrointestinal lumen (By similarity). Plays a stem cell regulator role in colon epithelium. Within intracellular compartment, mediates Paneth-like cell differentiation and its stem cell supporting functions by inhibiting the Wnt signaling pathway in intestinal stem cell (ISC). Secreted in the intestinal lumen upon inflammation, acts in an autocrine way and promotes prostaglandin E2 synthesis that stimulates Wnt signaling pathway in ISCs and tissue regeneration (By similarity). May participate in hair follicle morphogenesis by regulating phosphatidylethanolamines metabolism at the outermost epithelial layer and facilitating melanin synthesis (By similarity). By releasing lysophosphatidylcholines (LPCs) at sperm acrosome, controls sperm cell capacitation, acrosome reaction and overall fertility (By similarity). May promote neurite outgrowth in neuron fibers involved in nociception (By similarity). Contributes to lipid remodeling of cellular membranes and generation of lipid mediators involved in pathogen clearance. Cleaves sn-2 fatty acyl chains of phosphatidylglycerols and phosphatidylethanolamines, which are major components of membrane phospholipids in bacteria (PubMed:12359733). Displays bactericidal activity against Gram-positive bacteria by directly hydrolyzing phospholipids of the bacterial membrane (PubMed:11694541). In pulmonary epithelium, may contribute to host defense response against adenoviral infection. Prevents adenovirus entry into host cells by hydrolyzing host cell plasma membrane, releasing C16:0 LPCs that inhibit virus-mediated membrane fusion and viral infection. Likely prevents adenoviral entry into the endosomes of host cells (PubMed:16146426). May play a role in maturation and activation of innate immune cells including macrophages, group 2 innate lymphoid cells and mast cells (By similarity).</text>
</comment>
<comment type="catalytic activity">
    <reaction evidence="3 4 6">
        <text>a 1,2-diacyl-sn-glycero-3-phosphocholine + H2O = a 1-acyl-sn-glycero-3-phosphocholine + a fatty acid + H(+)</text>
        <dbReference type="Rhea" id="RHEA:15801"/>
        <dbReference type="ChEBI" id="CHEBI:15377"/>
        <dbReference type="ChEBI" id="CHEBI:15378"/>
        <dbReference type="ChEBI" id="CHEBI:28868"/>
        <dbReference type="ChEBI" id="CHEBI:57643"/>
        <dbReference type="ChEBI" id="CHEBI:58168"/>
        <dbReference type="EC" id="3.1.1.4"/>
    </reaction>
    <physiologicalReaction direction="left-to-right" evidence="14">
        <dbReference type="Rhea" id="RHEA:15802"/>
    </physiologicalReaction>
</comment>
<comment type="catalytic activity">
    <reaction evidence="8 10">
        <text>1-hexadecanoyl-2-(9Z-octadecenoyl)-sn-glycero-3-phosphocholine + H2O = 1-hexadecanoyl-sn-glycero-3-phosphocholine + (9Z)-octadecenoate + H(+)</text>
        <dbReference type="Rhea" id="RHEA:38779"/>
        <dbReference type="ChEBI" id="CHEBI:15377"/>
        <dbReference type="ChEBI" id="CHEBI:15378"/>
        <dbReference type="ChEBI" id="CHEBI:30823"/>
        <dbReference type="ChEBI" id="CHEBI:72998"/>
        <dbReference type="ChEBI" id="CHEBI:73001"/>
    </reaction>
    <physiologicalReaction direction="left-to-right" evidence="15 16">
        <dbReference type="Rhea" id="RHEA:38780"/>
    </physiologicalReaction>
</comment>
<comment type="catalytic activity">
    <reaction evidence="8">
        <text>1-octadecanoyl-2-(5Z,8Z,11Z,14Z-eicosatetraenoyl)-sn-glycero-3-phosphocholine + H2O = 1-octadecanoyl-sn-glycero-3-phosphocholine + (5Z,8Z,11Z,14Z)-eicosatetraenoate + H(+)</text>
        <dbReference type="Rhea" id="RHEA:40519"/>
        <dbReference type="ChEBI" id="CHEBI:15377"/>
        <dbReference type="ChEBI" id="CHEBI:15378"/>
        <dbReference type="ChEBI" id="CHEBI:32395"/>
        <dbReference type="ChEBI" id="CHEBI:73858"/>
        <dbReference type="ChEBI" id="CHEBI:74965"/>
    </reaction>
    <physiologicalReaction direction="left-to-right" evidence="15">
        <dbReference type="Rhea" id="RHEA:40520"/>
    </physiologicalReaction>
</comment>
<comment type="catalytic activity">
    <reaction evidence="8">
        <text>1,2-dihexadecanoyl-sn-glycero-3-phosphocholine + H2O = 1-hexadecanoyl-sn-glycero-3-phosphocholine + hexadecanoate + H(+)</text>
        <dbReference type="Rhea" id="RHEA:41223"/>
        <dbReference type="ChEBI" id="CHEBI:7896"/>
        <dbReference type="ChEBI" id="CHEBI:15377"/>
        <dbReference type="ChEBI" id="CHEBI:15378"/>
        <dbReference type="ChEBI" id="CHEBI:72998"/>
        <dbReference type="ChEBI" id="CHEBI:72999"/>
    </reaction>
    <physiologicalReaction direction="left-to-right" evidence="15">
        <dbReference type="Rhea" id="RHEA:41224"/>
    </physiologicalReaction>
</comment>
<comment type="catalytic activity">
    <reaction evidence="8">
        <text>1-hexadecanoyl-2-(9Z-octadecenoyl)-sn-glycero-3-phosphoglycerol + H2O = 1-hexadecanoyl-sn-glycero-3-phosphoglycerol + (9Z)-octadecenoate + H(+)</text>
        <dbReference type="Rhea" id="RHEA:44524"/>
        <dbReference type="ChEBI" id="CHEBI:15377"/>
        <dbReference type="ChEBI" id="CHEBI:15378"/>
        <dbReference type="ChEBI" id="CHEBI:30823"/>
        <dbReference type="ChEBI" id="CHEBI:84472"/>
        <dbReference type="ChEBI" id="CHEBI:84475"/>
    </reaction>
    <physiologicalReaction direction="left-to-right" evidence="15">
        <dbReference type="Rhea" id="RHEA:44525"/>
    </physiologicalReaction>
</comment>
<comment type="catalytic activity">
    <reaction evidence="1">
        <text>1,2-dihexadecanoyl-sn-glycero-3-phospho-(1'-sn-glycerol) + H2O = 1-hexadecanoyl-sn-glycero-3-phospho-(1'-sn-glycerol) + hexadecanoate + H(+)</text>
        <dbReference type="Rhea" id="RHEA:45472"/>
        <dbReference type="ChEBI" id="CHEBI:7896"/>
        <dbReference type="ChEBI" id="CHEBI:15377"/>
        <dbReference type="ChEBI" id="CHEBI:15378"/>
        <dbReference type="ChEBI" id="CHEBI:72829"/>
        <dbReference type="ChEBI" id="CHEBI:75158"/>
    </reaction>
    <physiologicalReaction direction="left-to-right" evidence="1">
        <dbReference type="Rhea" id="RHEA:45473"/>
    </physiologicalReaction>
</comment>
<comment type="catalytic activity">
    <reaction evidence="8">
        <text>1-hexadecanoyl-2-(9Z-octadecenoyl)-sn-glycero-3-phospho-L-serine + H2O = 1-hexadecanoyl-sn-glycero-3-phospho-L-serine + (9Z)-octadecenoate + H(+)</text>
        <dbReference type="Rhea" id="RHEA:41752"/>
        <dbReference type="ChEBI" id="CHEBI:15377"/>
        <dbReference type="ChEBI" id="CHEBI:15378"/>
        <dbReference type="ChEBI" id="CHEBI:30823"/>
        <dbReference type="ChEBI" id="CHEBI:75020"/>
        <dbReference type="ChEBI" id="CHEBI:75029"/>
    </reaction>
    <physiologicalReaction direction="left-to-right" evidence="15">
        <dbReference type="Rhea" id="RHEA:41753"/>
    </physiologicalReaction>
</comment>
<comment type="catalytic activity">
    <reaction evidence="8">
        <text>1-hexadecanoyl-2-(9Z,12Z-octadecadienoyl)-sn-glycero-3-phosphoethanolamine + H2O = 1-hexadecanoyl-sn-glycero-3-phosphoethanolamine + (9Z,12Z)-octadecadienoate + H(+)</text>
        <dbReference type="Rhea" id="RHEA:40815"/>
        <dbReference type="ChEBI" id="CHEBI:15377"/>
        <dbReference type="ChEBI" id="CHEBI:15378"/>
        <dbReference type="ChEBI" id="CHEBI:30245"/>
        <dbReference type="ChEBI" id="CHEBI:73004"/>
        <dbReference type="ChEBI" id="CHEBI:73008"/>
    </reaction>
    <physiologicalReaction direction="left-to-right" evidence="15">
        <dbReference type="Rhea" id="RHEA:40816"/>
    </physiologicalReaction>
</comment>
<comment type="catalytic activity">
    <reaction evidence="8">
        <text>1-hexadecanoyl-2-(9Z-octadecenoyl)-sn-glycero-3-phosphate + H2O = 1-hexadecanoyl-sn-glycero-3-phosphate + (9Z)-octadecenoate + H(+)</text>
        <dbReference type="Rhea" id="RHEA:63996"/>
        <dbReference type="ChEBI" id="CHEBI:15377"/>
        <dbReference type="ChEBI" id="CHEBI:15378"/>
        <dbReference type="ChEBI" id="CHEBI:30823"/>
        <dbReference type="ChEBI" id="CHEBI:57518"/>
        <dbReference type="ChEBI" id="CHEBI:64839"/>
    </reaction>
    <physiologicalReaction direction="left-to-right" evidence="15">
        <dbReference type="Rhea" id="RHEA:63997"/>
    </physiologicalReaction>
</comment>
<comment type="catalytic activity">
    <reaction evidence="10">
        <text>1-O-hexadecyl-2-acetyl-sn-glycero-3-phosphocholine + H2O = 1-O-hexadecyl-sn-glycero-3-phosphocholine + acetate + H(+)</text>
        <dbReference type="Rhea" id="RHEA:40479"/>
        <dbReference type="ChEBI" id="CHEBI:15377"/>
        <dbReference type="ChEBI" id="CHEBI:15378"/>
        <dbReference type="ChEBI" id="CHEBI:30089"/>
        <dbReference type="ChEBI" id="CHEBI:44811"/>
        <dbReference type="ChEBI" id="CHEBI:64496"/>
    </reaction>
    <physiologicalReaction direction="left-to-right" evidence="16">
        <dbReference type="Rhea" id="RHEA:40480"/>
    </physiologicalReaction>
</comment>
<comment type="cofactor">
    <cofactor evidence="7 12">
        <name>Ca(2+)</name>
        <dbReference type="ChEBI" id="CHEBI:29108"/>
    </cofactor>
    <text evidence="7">Binds 1 Ca(2+) ion per subunit.</text>
</comment>
<comment type="activity regulation">
    <text evidence="8">Inhibited by methyl indoxam.</text>
</comment>
<comment type="biophysicochemical properties">
    <phDependence>
        <text evidence="12">Optimum pH is 7.4.</text>
    </phDependence>
</comment>
<comment type="subunit">
    <text evidence="1">Interacts with PLA2R1; this interaction mediates PLA2G10 clearance and inactivation.</text>
</comment>
<comment type="interaction">
    <interactant intactId="EBI-726466">
        <id>O15496</id>
    </interactant>
    <interactant intactId="EBI-727098">
        <id>P21549</id>
        <label>AGXT</label>
    </interactant>
    <organismsDiffer>false</organismsDiffer>
    <experiments>3</experiments>
</comment>
<comment type="interaction">
    <interactant intactId="EBI-726466">
        <id>O15496</id>
    </interactant>
    <interactant intactId="EBI-745213">
        <id>P29972</id>
        <label>AQP1</label>
    </interactant>
    <organismsDiffer>false</organismsDiffer>
    <experiments>3</experiments>
</comment>
<comment type="interaction">
    <interactant intactId="EBI-726466">
        <id>O15496</id>
    </interactant>
    <interactant intactId="EBI-948603">
        <id>Q03989</id>
        <label>ARID5A</label>
    </interactant>
    <organismsDiffer>false</organismsDiffer>
    <experiments>3</experiments>
</comment>
<comment type="interaction">
    <interactant intactId="EBI-726466">
        <id>O15496</id>
    </interactant>
    <interactant intactId="EBI-930964">
        <id>P54253</id>
        <label>ATXN1</label>
    </interactant>
    <organismsDiffer>false</organismsDiffer>
    <experiments>3</experiments>
</comment>
<comment type="interaction">
    <interactant intactId="EBI-726466">
        <id>O15496</id>
    </interactant>
    <interactant intactId="EBI-747185">
        <id>O95817</id>
        <label>BAG3</label>
    </interactant>
    <organismsDiffer>false</organismsDiffer>
    <experiments>3</experiments>
</comment>
<comment type="interaction">
    <interactant intactId="EBI-726466">
        <id>O15496</id>
    </interactant>
    <interactant intactId="EBI-745073">
        <id>Q9BXY8</id>
        <label>BEX2</label>
    </interactant>
    <organismsDiffer>false</organismsDiffer>
    <experiments>3</experiments>
</comment>
<comment type="interaction">
    <interactant intactId="EBI-726466">
        <id>O15496</id>
    </interactant>
    <interactant intactId="EBI-946029">
        <id>Q6P1W5</id>
        <label>C1orf94</label>
    </interactant>
    <organismsDiffer>false</organismsDiffer>
    <experiments>3</experiments>
</comment>
<comment type="interaction">
    <interactant intactId="EBI-726466">
        <id>O15496</id>
    </interactant>
    <interactant intactId="EBI-744545">
        <id>Q8NEC5</id>
        <label>CATSPER1</label>
    </interactant>
    <organismsDiffer>false</organismsDiffer>
    <experiments>3</experiments>
</comment>
<comment type="interaction">
    <interactant intactId="EBI-726466">
        <id>O15496</id>
    </interactant>
    <interactant intactId="EBI-744556">
        <id>Q96HB5</id>
        <label>CCDC120</label>
    </interactant>
    <organismsDiffer>false</organismsDiffer>
    <experiments>3</experiments>
</comment>
<comment type="interaction">
    <interactant intactId="EBI-726466">
        <id>O15496</id>
    </interactant>
    <interactant intactId="EBI-10192698">
        <id>Q02930-3</id>
        <label>CREB5</label>
    </interactant>
    <organismsDiffer>false</organismsDiffer>
    <experiments>3</experiments>
</comment>
<comment type="interaction">
    <interactant intactId="EBI-726466">
        <id>O15496</id>
    </interactant>
    <interactant intactId="EBI-3867333">
        <id>A8MQ03</id>
        <label>CYSRT1</label>
    </interactant>
    <organismsDiffer>false</organismsDiffer>
    <experiments>3</experiments>
</comment>
<comment type="interaction">
    <interactant intactId="EBI-726466">
        <id>O15496</id>
    </interactant>
    <interactant intactId="EBI-2807642">
        <id>Q8WU58</id>
        <label>FAM222B</label>
    </interactant>
    <organismsDiffer>false</organismsDiffer>
    <experiments>3</experiments>
</comment>
<comment type="interaction">
    <interactant intactId="EBI-726466">
        <id>O15496</id>
    </interactant>
    <interactant intactId="EBI-1759806">
        <id>O75593</id>
        <label>FOXH1</label>
    </interactant>
    <organismsDiffer>false</organismsDiffer>
    <experiments>3</experiments>
</comment>
<comment type="interaction">
    <interactant intactId="EBI-726466">
        <id>O15496</id>
    </interactant>
    <interactant intactId="EBI-12132270">
        <id>Q9BWX5</id>
        <label>GATA5</label>
    </interactant>
    <organismsDiffer>false</organismsDiffer>
    <experiments>3</experiments>
</comment>
<comment type="interaction">
    <interactant intactId="EBI-726466">
        <id>O15496</id>
    </interactant>
    <interactant intactId="EBI-11975289">
        <id>Q9Y223-2</id>
        <label>GNE</label>
    </interactant>
    <organismsDiffer>false</organismsDiffer>
    <experiments>3</experiments>
</comment>
<comment type="interaction">
    <interactant intactId="EBI-726466">
        <id>O15496</id>
    </interactant>
    <interactant intactId="EBI-740220">
        <id>O14964</id>
        <label>HGS</label>
    </interactant>
    <organismsDiffer>false</organismsDiffer>
    <experiments>3</experiments>
</comment>
<comment type="interaction">
    <interactant intactId="EBI-726466">
        <id>O15496</id>
    </interactant>
    <interactant intactId="EBI-1752118">
        <id>P31273</id>
        <label>HOXC8</label>
    </interactant>
    <organismsDiffer>false</organismsDiffer>
    <experiments>3</experiments>
</comment>
<comment type="interaction">
    <interactant intactId="EBI-726466">
        <id>O15496</id>
    </interactant>
    <interactant intactId="EBI-2880706">
        <id>O43593</id>
        <label>HR</label>
    </interactant>
    <organismsDiffer>false</organismsDiffer>
    <experiments>3</experiments>
</comment>
<comment type="interaction">
    <interactant intactId="EBI-726466">
        <id>O15496</id>
    </interactant>
    <interactant intactId="EBI-12056251">
        <id>Q9ULV5-2</id>
        <label>HSF4</label>
    </interactant>
    <organismsDiffer>false</organismsDiffer>
    <experiments>3</experiments>
</comment>
<comment type="interaction">
    <interactant intactId="EBI-726466">
        <id>O15496</id>
    </interactant>
    <interactant intactId="EBI-6509505">
        <id>Q0VD86</id>
        <label>INCA1</label>
    </interactant>
    <organismsDiffer>false</organismsDiffer>
    <experiments>3</experiments>
</comment>
<comment type="interaction">
    <interactant intactId="EBI-726466">
        <id>O15496</id>
    </interactant>
    <interactant intactId="EBI-10981970">
        <id>Q5T749</id>
        <label>KPRP</label>
    </interactant>
    <organismsDiffer>false</organismsDiffer>
    <experiments>3</experiments>
</comment>
<comment type="interaction">
    <interactant intactId="EBI-726466">
        <id>O15496</id>
    </interactant>
    <interactant intactId="EBI-1052037">
        <id>Q8IUC1</id>
        <label>KRTAP11-1</label>
    </interactant>
    <organismsDiffer>false</organismsDiffer>
    <experiments>3</experiments>
</comment>
<comment type="interaction">
    <interactant intactId="EBI-726466">
        <id>O15496</id>
    </interactant>
    <interactant intactId="EBI-3957672">
        <id>Q6PEX3</id>
        <label>KRTAP26-1</label>
    </interactant>
    <organismsDiffer>false</organismsDiffer>
    <experiments>3</experiments>
</comment>
<comment type="interaction">
    <interactant intactId="EBI-726466">
        <id>O15496</id>
    </interactant>
    <interactant intactId="EBI-11962058">
        <id>Q5T7P2</id>
        <label>LCE1A</label>
    </interactant>
    <organismsDiffer>false</organismsDiffer>
    <experiments>3</experiments>
</comment>
<comment type="interaction">
    <interactant intactId="EBI-726466">
        <id>O15496</id>
    </interactant>
    <interactant intactId="EBI-12224199">
        <id>Q5T751</id>
        <label>LCE1C</label>
    </interactant>
    <organismsDiffer>false</organismsDiffer>
    <experiments>3</experiments>
</comment>
<comment type="interaction">
    <interactant intactId="EBI-726466">
        <id>O15496</id>
    </interactant>
    <interactant intactId="EBI-10246607">
        <id>Q5TA79</id>
        <label>LCE2A</label>
    </interactant>
    <organismsDiffer>false</organismsDiffer>
    <experiments>3</experiments>
</comment>
<comment type="interaction">
    <interactant intactId="EBI-726466">
        <id>O15496</id>
    </interactant>
    <interactant intactId="EBI-11478468">
        <id>O14633</id>
        <label>LCE2B</label>
    </interactant>
    <organismsDiffer>false</organismsDiffer>
    <experiments>4</experiments>
</comment>
<comment type="interaction">
    <interactant intactId="EBI-726466">
        <id>O15496</id>
    </interactant>
    <interactant intactId="EBI-10246750">
        <id>Q5TA82</id>
        <label>LCE2D</label>
    </interactant>
    <organismsDiffer>false</organismsDiffer>
    <experiments>3</experiments>
</comment>
<comment type="interaction">
    <interactant intactId="EBI-726466">
        <id>O15496</id>
    </interactant>
    <interactant intactId="EBI-3932027">
        <id>P21145</id>
        <label>MAL</label>
    </interactant>
    <organismsDiffer>false</organismsDiffer>
    <experiments>3</experiments>
</comment>
<comment type="interaction">
    <interactant intactId="EBI-726466">
        <id>O15496</id>
    </interactant>
    <interactant intactId="EBI-947402">
        <id>O60336</id>
        <label>MAPKBP1</label>
    </interactant>
    <organismsDiffer>false</organismsDiffer>
    <experiments>3</experiments>
</comment>
<comment type="interaction">
    <interactant intactId="EBI-726466">
        <id>O15496</id>
    </interactant>
    <interactant intactId="EBI-12025760">
        <id>Q86UR1-2</id>
        <label>NOXA1</label>
    </interactant>
    <organismsDiffer>false</organismsDiffer>
    <experiments>3</experiments>
</comment>
<comment type="interaction">
    <interactant intactId="EBI-726466">
        <id>O15496</id>
    </interactant>
    <interactant intactId="EBI-741158">
        <id>Q96HA8</id>
        <label>NTAQ1</label>
    </interactant>
    <organismsDiffer>false</organismsDiffer>
    <experiments>5</experiments>
</comment>
<comment type="interaction">
    <interactant intactId="EBI-726466">
        <id>O15496</id>
    </interactant>
    <interactant intactId="EBI-740446">
        <id>P32242</id>
        <label>OTX1</label>
    </interactant>
    <organismsDiffer>false</organismsDiffer>
    <experiments>3</experiments>
</comment>
<comment type="interaction">
    <interactant intactId="EBI-726466">
        <id>O15496</id>
    </interactant>
    <interactant intactId="EBI-748265">
        <id>P78337</id>
        <label>PITX1</label>
    </interactant>
    <organismsDiffer>false</organismsDiffer>
    <experiments>3</experiments>
</comment>
<comment type="interaction">
    <interactant intactId="EBI-726466">
        <id>O15496</id>
    </interactant>
    <interactant intactId="EBI-12033574">
        <id>Q15319</id>
        <label>POU4F3</label>
    </interactant>
    <organismsDiffer>false</organismsDiffer>
    <experiments>3</experiments>
</comment>
<comment type="interaction">
    <interactant intactId="EBI-726466">
        <id>O15496</id>
    </interactant>
    <interactant intactId="EBI-6422642">
        <id>Q01974</id>
        <label>ROR2</label>
    </interactant>
    <organismsDiffer>false</organismsDiffer>
    <experiments>3</experiments>
</comment>
<comment type="interaction">
    <interactant intactId="EBI-726466">
        <id>O15496</id>
    </interactant>
    <interactant intactId="EBI-12000762">
        <id>Q7Z5V6-2</id>
        <label>SAXO4</label>
    </interactant>
    <organismsDiffer>false</organismsDiffer>
    <experiments>3</experiments>
</comment>
<comment type="interaction">
    <interactant intactId="EBI-726466">
        <id>O15496</id>
    </interactant>
    <interactant intactId="EBI-766589">
        <id>P09234</id>
        <label>SNRPC</label>
    </interactant>
    <organismsDiffer>false</organismsDiffer>
    <experiments>3</experiments>
</comment>
<comment type="interaction">
    <interactant intactId="EBI-726466">
        <id>O15496</id>
    </interactant>
    <interactant intactId="EBI-11959123">
        <id>Q99932-2</id>
        <label>SPAG8</label>
    </interactant>
    <organismsDiffer>false</organismsDiffer>
    <experiments>3</experiments>
</comment>
<comment type="interaction">
    <interactant intactId="EBI-726466">
        <id>O15496</id>
    </interactant>
    <interactant intactId="EBI-5235340">
        <id>Q7Z699</id>
        <label>SPRED1</label>
    </interactant>
    <organismsDiffer>false</organismsDiffer>
    <experiments>3</experiments>
</comment>
<comment type="interaction">
    <interactant intactId="EBI-726466">
        <id>O15496</id>
    </interactant>
    <interactant intactId="EBI-749295">
        <id>O75716</id>
        <label>STK16</label>
    </interactant>
    <organismsDiffer>false</organismsDiffer>
    <experiments>3</experiments>
</comment>
<comment type="interaction">
    <interactant intactId="EBI-726466">
        <id>O15496</id>
    </interactant>
    <interactant intactId="EBI-2824328">
        <id>O95947</id>
        <label>TBX6</label>
    </interactant>
    <organismsDiffer>false</organismsDiffer>
    <experiments>3</experiments>
</comment>
<comment type="interaction">
    <interactant intactId="EBI-726466">
        <id>O15496</id>
    </interactant>
    <interactant intactId="EBI-357061">
        <id>Q92734</id>
        <label>TFG</label>
    </interactant>
    <organismsDiffer>false</organismsDiffer>
    <experiments>3</experiments>
</comment>
<comment type="interaction">
    <interactant intactId="EBI-726466">
        <id>O15496</id>
    </interactant>
    <interactant intactId="EBI-3939165">
        <id>O43711</id>
        <label>TLX3</label>
    </interactant>
    <organismsDiffer>false</organismsDiffer>
    <experiments>3</experiments>
</comment>
<comment type="interaction">
    <interactant intactId="EBI-726466">
        <id>O15496</id>
    </interactant>
    <interactant intactId="EBI-11957216">
        <id>A8MV65-2</id>
        <label>VGLL3</label>
    </interactant>
    <organismsDiffer>false</organismsDiffer>
    <experiments>3</experiments>
</comment>
<comment type="interaction">
    <interactant intactId="EBI-726466">
        <id>O15496</id>
    </interactant>
    <interactant intactId="EBI-2559305">
        <id>A5D8V6</id>
        <label>VPS37C</label>
    </interactant>
    <organismsDiffer>false</organismsDiffer>
    <experiments>3</experiments>
</comment>
<comment type="interaction">
    <interactant intactId="EBI-726466">
        <id>O15496</id>
    </interactant>
    <interactant intactId="EBI-742550">
        <id>Q96K80</id>
        <label>ZC3H10</label>
    </interactant>
    <organismsDiffer>false</organismsDiffer>
    <experiments>3</experiments>
</comment>
<comment type="subcellular location">
    <subcellularLocation>
        <location evidence="12">Secreted</location>
    </subcellularLocation>
    <subcellularLocation>
        <location evidence="1">Lysosome</location>
    </subcellularLocation>
    <subcellularLocation>
        <location evidence="1">Cytoplasmic vesicle</location>
        <location evidence="1">Secretory vesicle</location>
        <location evidence="1">Acrosome</location>
    </subcellularLocation>
</comment>
<comment type="tissue specificity">
    <text evidence="11 12">Found in spleen, thymus, peripheral blood leukocytes, pancreas, lung, and colon (PubMed:9188469). Expressed in neuronal fibers in dorsal root ganglia and in peripheral tissues including stomach, white adipose tissue and prostate (at protein level) (PubMed:21266581).</text>
</comment>
<comment type="similarity">
    <text evidence="13">Belongs to the phospholipase A2 family.</text>
</comment>
<accession>O15496</accession>
<accession>Q14DU3</accession>
<accession>Q6NT23</accession>
<feature type="signal peptide" evidence="2">
    <location>
        <begin position="1"/>
        <end position="31"/>
    </location>
</feature>
<feature type="propeptide" id="PRO_0000022764" evidence="2">
    <location>
        <begin position="32"/>
        <end position="42"/>
    </location>
</feature>
<feature type="chain" id="PRO_0000022765" description="Group 10 secretory phospholipase A2">
    <location>
        <begin position="43"/>
        <end position="165"/>
    </location>
</feature>
<feature type="active site" evidence="7">
    <location>
        <position position="88"/>
    </location>
</feature>
<feature type="active site" evidence="7">
    <location>
        <position position="133"/>
    </location>
</feature>
<feature type="binding site" evidence="7 17 18">
    <location>
        <position position="68"/>
    </location>
    <ligand>
        <name>Ca(2+)</name>
        <dbReference type="ChEBI" id="CHEBI:29108"/>
    </ligand>
</feature>
<feature type="binding site" evidence="7 17 18">
    <location>
        <position position="70"/>
    </location>
    <ligand>
        <name>Ca(2+)</name>
        <dbReference type="ChEBI" id="CHEBI:29108"/>
    </ligand>
</feature>
<feature type="binding site" evidence="7 17 18">
    <location>
        <position position="72"/>
    </location>
    <ligand>
        <name>Ca(2+)</name>
        <dbReference type="ChEBI" id="CHEBI:29108"/>
    </ligand>
</feature>
<feature type="binding site" evidence="7 17 18">
    <location>
        <position position="89"/>
    </location>
    <ligand>
        <name>Ca(2+)</name>
        <dbReference type="ChEBI" id="CHEBI:29108"/>
    </ligand>
</feature>
<feature type="glycosylation site" description="N-linked (GlcNAc...) asparagine" evidence="2">
    <location>
        <position position="113"/>
    </location>
</feature>
<feature type="disulfide bond" evidence="7">
    <location>
        <begin position="53"/>
        <end position="111"/>
    </location>
</feature>
<feature type="disulfide bond" evidence="7">
    <location>
        <begin position="67"/>
        <end position="157"/>
    </location>
</feature>
<feature type="disulfide bond" evidence="7">
    <location>
        <begin position="69"/>
        <end position="85"/>
    </location>
</feature>
<feature type="disulfide bond" evidence="7">
    <location>
        <begin position="84"/>
        <end position="139"/>
    </location>
</feature>
<feature type="disulfide bond" evidence="7">
    <location>
        <begin position="90"/>
        <end position="164"/>
    </location>
</feature>
<feature type="disulfide bond" evidence="7">
    <location>
        <begin position="91"/>
        <end position="132"/>
    </location>
</feature>
<feature type="disulfide bond" evidence="7">
    <location>
        <begin position="100"/>
        <end position="125"/>
    </location>
</feature>
<feature type="disulfide bond" evidence="7">
    <location>
        <begin position="118"/>
        <end position="130"/>
    </location>
</feature>
<feature type="mutagenesis site" description="Loss of PLA2 activity toward PAF. Impairs anti-adenoviral activity." evidence="9 10">
    <original>H</original>
    <variation>Q</variation>
    <location>
        <position position="88"/>
    </location>
</feature>
<feature type="helix" evidence="19">
    <location>
        <begin position="44"/>
        <end position="54"/>
    </location>
</feature>
<feature type="strand" evidence="19">
    <location>
        <begin position="55"/>
        <end position="57"/>
    </location>
</feature>
<feature type="helix" evidence="19">
    <location>
        <begin position="59"/>
        <end position="62"/>
    </location>
</feature>
<feature type="strand" evidence="19">
    <location>
        <begin position="63"/>
        <end position="65"/>
    </location>
</feature>
<feature type="turn" evidence="19">
    <location>
        <begin position="66"/>
        <end position="68"/>
    </location>
</feature>
<feature type="strand" evidence="19">
    <location>
        <begin position="69"/>
        <end position="72"/>
    </location>
</feature>
<feature type="helix" evidence="19">
    <location>
        <begin position="80"/>
        <end position="97"/>
    </location>
</feature>
<feature type="turn" evidence="19">
    <location>
        <begin position="102"/>
        <end position="104"/>
    </location>
</feature>
<feature type="strand" evidence="19">
    <location>
        <begin position="109"/>
        <end position="112"/>
    </location>
</feature>
<feature type="strand" evidence="19">
    <location>
        <begin position="115"/>
        <end position="118"/>
    </location>
</feature>
<feature type="helix" evidence="19">
    <location>
        <begin position="124"/>
        <end position="141"/>
    </location>
</feature>
<feature type="helix" evidence="19">
    <location>
        <begin position="147"/>
        <end position="149"/>
    </location>
</feature>
<feature type="helix" evidence="19">
    <location>
        <begin position="154"/>
        <end position="156"/>
    </location>
</feature>
<organism>
    <name type="scientific">Homo sapiens</name>
    <name type="common">Human</name>
    <dbReference type="NCBI Taxonomy" id="9606"/>
    <lineage>
        <taxon>Eukaryota</taxon>
        <taxon>Metazoa</taxon>
        <taxon>Chordata</taxon>
        <taxon>Craniata</taxon>
        <taxon>Vertebrata</taxon>
        <taxon>Euteleostomi</taxon>
        <taxon>Mammalia</taxon>
        <taxon>Eutheria</taxon>
        <taxon>Euarchontoglires</taxon>
        <taxon>Primates</taxon>
        <taxon>Haplorrhini</taxon>
        <taxon>Catarrhini</taxon>
        <taxon>Hominidae</taxon>
        <taxon>Homo</taxon>
    </lineage>
</organism>
<evidence type="ECO:0000250" key="1">
    <source>
        <dbReference type="UniProtKB" id="Q9QXX3"/>
    </source>
</evidence>
<evidence type="ECO:0000255" key="2"/>
<evidence type="ECO:0000255" key="3">
    <source>
        <dbReference type="PROSITE-ProRule" id="PRU10035"/>
    </source>
</evidence>
<evidence type="ECO:0000255" key="4">
    <source>
        <dbReference type="PROSITE-ProRule" id="PRU10036"/>
    </source>
</evidence>
<evidence type="ECO:0000269" key="5">
    <source>
    </source>
</evidence>
<evidence type="ECO:0000269" key="6">
    <source>
    </source>
</evidence>
<evidence type="ECO:0000269" key="7">
    <source>
    </source>
</evidence>
<evidence type="ECO:0000269" key="8">
    <source>
    </source>
</evidence>
<evidence type="ECO:0000269" key="9">
    <source>
    </source>
</evidence>
<evidence type="ECO:0000269" key="10">
    <source>
    </source>
</evidence>
<evidence type="ECO:0000269" key="11">
    <source>
    </source>
</evidence>
<evidence type="ECO:0000269" key="12">
    <source>
    </source>
</evidence>
<evidence type="ECO:0000305" key="13"/>
<evidence type="ECO:0000305" key="14">
    <source>
    </source>
</evidence>
<evidence type="ECO:0000305" key="15">
    <source>
    </source>
</evidence>
<evidence type="ECO:0000305" key="16">
    <source>
    </source>
</evidence>
<evidence type="ECO:0007744" key="17">
    <source>
        <dbReference type="PDB" id="1LE6"/>
    </source>
</evidence>
<evidence type="ECO:0007744" key="18">
    <source>
        <dbReference type="PDB" id="1LE7"/>
    </source>
</evidence>
<evidence type="ECO:0007829" key="19">
    <source>
        <dbReference type="PDB" id="5OWC"/>
    </source>
</evidence>
<protein>
    <recommendedName>
        <fullName>Group 10 secretory phospholipase A2</fullName>
        <ecNumber evidence="6">3.1.1.4</ecNumber>
    </recommendedName>
    <alternativeName>
        <fullName>Group X secretory phospholipase A2</fullName>
        <shortName>GX sPLA2</shortName>
        <shortName>sPLA2-X</shortName>
    </alternativeName>
    <alternativeName>
        <fullName>Phosphatidylcholine 2-acylhydrolase 10</fullName>
    </alternativeName>
</protein>
<proteinExistence type="evidence at protein level"/>
<gene>
    <name type="primary">PLA2G10</name>
</gene>
<dbReference type="EC" id="3.1.1.4" evidence="6"/>
<dbReference type="EMBL" id="U95301">
    <property type="protein sequence ID" value="AAB64410.1"/>
    <property type="molecule type" value="mRNA"/>
</dbReference>
<dbReference type="EMBL" id="CR456885">
    <property type="protein sequence ID" value="CAG33166.1"/>
    <property type="molecule type" value="mRNA"/>
</dbReference>
<dbReference type="EMBL" id="AC009167">
    <property type="status" value="NOT_ANNOTATED_CDS"/>
    <property type="molecule type" value="Genomic_DNA"/>
</dbReference>
<dbReference type="EMBL" id="CH471112">
    <property type="protein sequence ID" value="EAW85104.1"/>
    <property type="molecule type" value="Genomic_DNA"/>
</dbReference>
<dbReference type="EMBL" id="BC069539">
    <property type="protein sequence ID" value="AAH69539.1"/>
    <property type="molecule type" value="mRNA"/>
</dbReference>
<dbReference type="EMBL" id="BC106731">
    <property type="protein sequence ID" value="AAI06732.1"/>
    <property type="molecule type" value="mRNA"/>
</dbReference>
<dbReference type="EMBL" id="BC106732">
    <property type="protein sequence ID" value="AAI06733.1"/>
    <property type="molecule type" value="mRNA"/>
</dbReference>
<dbReference type="EMBL" id="BC111804">
    <property type="protein sequence ID" value="AAI11805.1"/>
    <property type="molecule type" value="mRNA"/>
</dbReference>
<dbReference type="CCDS" id="CCDS10555.1"/>
<dbReference type="RefSeq" id="NP_003552.1">
    <property type="nucleotide sequence ID" value="NM_003561.3"/>
</dbReference>
<dbReference type="RefSeq" id="XP_047290713.1">
    <property type="nucleotide sequence ID" value="XM_047434757.1"/>
</dbReference>
<dbReference type="RefSeq" id="XP_054185113.1">
    <property type="nucleotide sequence ID" value="XM_054329138.1"/>
</dbReference>
<dbReference type="PDB" id="1LE6">
    <property type="method" value="X-ray"/>
    <property type="resolution" value="1.97 A"/>
    <property type="chains" value="A/B/C=43-165"/>
</dbReference>
<dbReference type="PDB" id="1LE7">
    <property type="method" value="X-ray"/>
    <property type="resolution" value="2.09 A"/>
    <property type="chains" value="A/B=43-165"/>
</dbReference>
<dbReference type="PDB" id="4UY1">
    <property type="method" value="X-ray"/>
    <property type="resolution" value="2.20 A"/>
    <property type="chains" value="A/B=43-165"/>
</dbReference>
<dbReference type="PDB" id="5G3M">
    <property type="method" value="X-ray"/>
    <property type="resolution" value="1.85 A"/>
    <property type="chains" value="A/B=43-165"/>
</dbReference>
<dbReference type="PDB" id="5OW8">
    <property type="method" value="X-ray"/>
    <property type="resolution" value="1.90 A"/>
    <property type="chains" value="A/B=43-165"/>
</dbReference>
<dbReference type="PDB" id="5OWC">
    <property type="method" value="X-ray"/>
    <property type="resolution" value="1.75 A"/>
    <property type="chains" value="A/B=43-164"/>
</dbReference>
<dbReference type="PDB" id="6G5J">
    <property type="method" value="X-ray"/>
    <property type="resolution" value="1.85 A"/>
    <property type="chains" value="A/B=1-165"/>
</dbReference>
<dbReference type="PDBsum" id="1LE6"/>
<dbReference type="PDBsum" id="1LE7"/>
<dbReference type="PDBsum" id="4UY1"/>
<dbReference type="PDBsum" id="5G3M"/>
<dbReference type="PDBsum" id="5OW8"/>
<dbReference type="PDBsum" id="5OWC"/>
<dbReference type="PDBsum" id="6G5J"/>
<dbReference type="SMR" id="O15496"/>
<dbReference type="BioGRID" id="113987">
    <property type="interactions" value="159"/>
</dbReference>
<dbReference type="FunCoup" id="O15496">
    <property type="interactions" value="553"/>
</dbReference>
<dbReference type="IntAct" id="O15496">
    <property type="interactions" value="103"/>
</dbReference>
<dbReference type="STRING" id="9606.ENSP00000393847"/>
<dbReference type="BindingDB" id="O15496"/>
<dbReference type="ChEMBL" id="CHEMBL4342"/>
<dbReference type="DrugBank" id="DB13894">
    <property type="generic name" value="Agkistrodon piscivorus antivenin"/>
</dbReference>
<dbReference type="DrugBank" id="DB13893">
    <property type="generic name" value="Crotalus adamanteus antivenin"/>
</dbReference>
<dbReference type="DrugBank" id="DB13892">
    <property type="generic name" value="Crotalus atrox antivenin"/>
</dbReference>
<dbReference type="DrugBank" id="DB05737">
    <property type="generic name" value="Varespladib methyl"/>
</dbReference>
<dbReference type="GuidetoPHARMACOLOGY" id="1422"/>
<dbReference type="SwissLipids" id="SLP:000001084"/>
<dbReference type="GlyCosmos" id="O15496">
    <property type="glycosylation" value="1 site, No reported glycans"/>
</dbReference>
<dbReference type="GlyGen" id="O15496">
    <property type="glycosylation" value="2 sites, 1 O-linked glycan (1 site)"/>
</dbReference>
<dbReference type="iPTMnet" id="O15496"/>
<dbReference type="BioMuta" id="PLA2G10"/>
<dbReference type="MassIVE" id="O15496"/>
<dbReference type="PaxDb" id="9606-ENSP00000393847"/>
<dbReference type="PeptideAtlas" id="O15496"/>
<dbReference type="Antibodypedia" id="24881">
    <property type="antibodies" value="97 antibodies from 15 providers"/>
</dbReference>
<dbReference type="DNASU" id="8399"/>
<dbReference type="Ensembl" id="ENST00000438167.8">
    <property type="protein sequence ID" value="ENSP00000393847.4"/>
    <property type="gene ID" value="ENSG00000069764.10"/>
</dbReference>
<dbReference type="Ensembl" id="ENST00000621727.2">
    <property type="protein sequence ID" value="ENSP00000479397.1"/>
    <property type="gene ID" value="ENSG00000276870.2"/>
</dbReference>
<dbReference type="GeneID" id="8399"/>
<dbReference type="KEGG" id="hsa:8399"/>
<dbReference type="MANE-Select" id="ENST00000438167.8">
    <property type="protein sequence ID" value="ENSP00000393847.4"/>
    <property type="RefSeq nucleotide sequence ID" value="NM_003561.3"/>
    <property type="RefSeq protein sequence ID" value="NP_003552.1"/>
</dbReference>
<dbReference type="UCSC" id="uc002dcq.4">
    <property type="organism name" value="human"/>
</dbReference>
<dbReference type="AGR" id="HGNC:9029"/>
<dbReference type="CTD" id="8399"/>
<dbReference type="DisGeNET" id="8399"/>
<dbReference type="GeneCards" id="PLA2G10"/>
<dbReference type="HGNC" id="HGNC:9029">
    <property type="gene designation" value="PLA2G10"/>
</dbReference>
<dbReference type="HPA" id="ENSG00000069764">
    <property type="expression patterns" value="Tissue enhanced (intestine, stomach)"/>
</dbReference>
<dbReference type="MIM" id="603603">
    <property type="type" value="gene"/>
</dbReference>
<dbReference type="neXtProt" id="NX_O15496"/>
<dbReference type="OpenTargets" id="ENSG00000069764"/>
<dbReference type="PharmGKB" id="PA33360"/>
<dbReference type="VEuPathDB" id="HostDB:ENSG00000069764"/>
<dbReference type="eggNOG" id="KOG4087">
    <property type="taxonomic scope" value="Eukaryota"/>
</dbReference>
<dbReference type="GeneTree" id="ENSGT00940000157803"/>
<dbReference type="HOGENOM" id="CLU_090683_3_1_1"/>
<dbReference type="InParanoid" id="O15496"/>
<dbReference type="OMA" id="YPRFLCE"/>
<dbReference type="OrthoDB" id="10069378at2759"/>
<dbReference type="PAN-GO" id="O15496">
    <property type="GO annotations" value="5 GO annotations based on evolutionary models"/>
</dbReference>
<dbReference type="PhylomeDB" id="O15496"/>
<dbReference type="TreeFam" id="TF319283"/>
<dbReference type="BRENDA" id="3.1.1.4">
    <property type="organism ID" value="2681"/>
</dbReference>
<dbReference type="PathwayCommons" id="O15496"/>
<dbReference type="Reactome" id="R-HSA-1482788">
    <property type="pathway name" value="Acyl chain remodelling of PC"/>
</dbReference>
<dbReference type="Reactome" id="R-HSA-1482801">
    <property type="pathway name" value="Acyl chain remodelling of PS"/>
</dbReference>
<dbReference type="Reactome" id="R-HSA-1482839">
    <property type="pathway name" value="Acyl chain remodelling of PE"/>
</dbReference>
<dbReference type="Reactome" id="R-HSA-1482922">
    <property type="pathway name" value="Acyl chain remodelling of PI"/>
</dbReference>
<dbReference type="Reactome" id="R-HSA-1482925">
    <property type="pathway name" value="Acyl chain remodelling of PG"/>
</dbReference>
<dbReference type="Reactome" id="R-HSA-1483166">
    <property type="pathway name" value="Synthesis of PA"/>
</dbReference>
<dbReference type="SignaLink" id="O15496"/>
<dbReference type="BioGRID-ORCS" id="8399">
    <property type="hits" value="472 hits in 1147 CRISPR screens"/>
</dbReference>
<dbReference type="ChiTaRS" id="PLA2G10">
    <property type="organism name" value="human"/>
</dbReference>
<dbReference type="EvolutionaryTrace" id="O15496"/>
<dbReference type="GeneWiki" id="PLA2G10"/>
<dbReference type="GenomeRNAi" id="8399"/>
<dbReference type="Pharos" id="O15496">
    <property type="development level" value="Tchem"/>
</dbReference>
<dbReference type="PRO" id="PR:O15496"/>
<dbReference type="Proteomes" id="UP000005640">
    <property type="component" value="Chromosome 16"/>
</dbReference>
<dbReference type="RNAct" id="O15496">
    <property type="molecule type" value="protein"/>
</dbReference>
<dbReference type="Bgee" id="ENSG00000069764">
    <property type="expression patterns" value="Expressed in mucosa of transverse colon and 91 other cell types or tissues"/>
</dbReference>
<dbReference type="ExpressionAtlas" id="O15496">
    <property type="expression patterns" value="baseline and differential"/>
</dbReference>
<dbReference type="GO" id="GO:0001669">
    <property type="term" value="C:acrosomal vesicle"/>
    <property type="evidence" value="ECO:0000250"/>
    <property type="project" value="UniProtKB"/>
</dbReference>
<dbReference type="GO" id="GO:0005576">
    <property type="term" value="C:extracellular region"/>
    <property type="evidence" value="ECO:0000304"/>
    <property type="project" value="Reactome"/>
</dbReference>
<dbReference type="GO" id="GO:0005615">
    <property type="term" value="C:extracellular space"/>
    <property type="evidence" value="ECO:0000314"/>
    <property type="project" value="UniProtKB"/>
</dbReference>
<dbReference type="GO" id="GO:0005764">
    <property type="term" value="C:lysosome"/>
    <property type="evidence" value="ECO:0007669"/>
    <property type="project" value="UniProtKB-SubCell"/>
</dbReference>
<dbReference type="GO" id="GO:0003847">
    <property type="term" value="F:1-alkyl-2-acetylglycerophosphocholine esterase activity"/>
    <property type="evidence" value="ECO:0000314"/>
    <property type="project" value="UniProtKB"/>
</dbReference>
<dbReference type="GO" id="GO:0005509">
    <property type="term" value="F:calcium ion binding"/>
    <property type="evidence" value="ECO:0000318"/>
    <property type="project" value="GO_Central"/>
</dbReference>
<dbReference type="GO" id="GO:0047498">
    <property type="term" value="F:calcium-dependent phospholipase A2 activity"/>
    <property type="evidence" value="ECO:0000314"/>
    <property type="project" value="UniProtKB"/>
</dbReference>
<dbReference type="GO" id="GO:0004623">
    <property type="term" value="F:phospholipase A2 activity"/>
    <property type="evidence" value="ECO:0000304"/>
    <property type="project" value="ProtInc"/>
</dbReference>
<dbReference type="GO" id="GO:0004620">
    <property type="term" value="F:phospholipase activity"/>
    <property type="evidence" value="ECO:0000250"/>
    <property type="project" value="BHF-UCL"/>
</dbReference>
<dbReference type="GO" id="GO:0005543">
    <property type="term" value="F:phospholipid binding"/>
    <property type="evidence" value="ECO:0000318"/>
    <property type="project" value="GO_Central"/>
</dbReference>
<dbReference type="GO" id="GO:0019369">
    <property type="term" value="P:arachidonate metabolic process"/>
    <property type="evidence" value="ECO:0000303"/>
    <property type="project" value="BHF-UCL"/>
</dbReference>
<dbReference type="GO" id="GO:0050482">
    <property type="term" value="P:arachidonate secretion"/>
    <property type="evidence" value="ECO:0007669"/>
    <property type="project" value="InterPro"/>
</dbReference>
<dbReference type="GO" id="GO:0007411">
    <property type="term" value="P:axon guidance"/>
    <property type="evidence" value="ECO:0000314"/>
    <property type="project" value="MGI"/>
</dbReference>
<dbReference type="GO" id="GO:1990830">
    <property type="term" value="P:cellular response to leukemia inhibitory factor"/>
    <property type="evidence" value="ECO:0007669"/>
    <property type="project" value="Ensembl"/>
</dbReference>
<dbReference type="GO" id="GO:0042632">
    <property type="term" value="P:cholesterol homeostasis"/>
    <property type="evidence" value="ECO:0000250"/>
    <property type="project" value="BHF-UCL"/>
</dbReference>
<dbReference type="GO" id="GO:0051607">
    <property type="term" value="P:defense response to virus"/>
    <property type="evidence" value="ECO:0000314"/>
    <property type="project" value="UniProtKB"/>
</dbReference>
<dbReference type="GO" id="GO:0043249">
    <property type="term" value="P:erythrocyte maturation"/>
    <property type="evidence" value="ECO:0007669"/>
    <property type="project" value="Ensembl"/>
</dbReference>
<dbReference type="GO" id="GO:0009566">
    <property type="term" value="P:fertilization"/>
    <property type="evidence" value="ECO:0007669"/>
    <property type="project" value="Ensembl"/>
</dbReference>
<dbReference type="GO" id="GO:0031069">
    <property type="term" value="P:hair follicle morphogenesis"/>
    <property type="evidence" value="ECO:0007669"/>
    <property type="project" value="Ensembl"/>
</dbReference>
<dbReference type="GO" id="GO:0036335">
    <property type="term" value="P:intestinal stem cell homeostasis"/>
    <property type="evidence" value="ECO:0007669"/>
    <property type="project" value="Ensembl"/>
</dbReference>
<dbReference type="GO" id="GO:0034374">
    <property type="term" value="P:low-density lipoprotein particle remodeling"/>
    <property type="evidence" value="ECO:0000314"/>
    <property type="project" value="UniProtKB"/>
</dbReference>
<dbReference type="GO" id="GO:0051977">
    <property type="term" value="P:lysophospholipid transport"/>
    <property type="evidence" value="ECO:0000314"/>
    <property type="project" value="MGI"/>
</dbReference>
<dbReference type="GO" id="GO:0042116">
    <property type="term" value="P:macrophage activation"/>
    <property type="evidence" value="ECO:0007669"/>
    <property type="project" value="Ensembl"/>
</dbReference>
<dbReference type="GO" id="GO:0090370">
    <property type="term" value="P:negative regulation of cholesterol efflux"/>
    <property type="evidence" value="ECO:0000250"/>
    <property type="project" value="BHF-UCL"/>
</dbReference>
<dbReference type="GO" id="GO:1900016">
    <property type="term" value="P:negative regulation of cytokine production involved in inflammatory response"/>
    <property type="evidence" value="ECO:0007669"/>
    <property type="project" value="Ensembl"/>
</dbReference>
<dbReference type="GO" id="GO:0050728">
    <property type="term" value="P:negative regulation of inflammatory response"/>
    <property type="evidence" value="ECO:0007669"/>
    <property type="project" value="Ensembl"/>
</dbReference>
<dbReference type="GO" id="GO:0000122">
    <property type="term" value="P:negative regulation of transcription by RNA polymerase II"/>
    <property type="evidence" value="ECO:0000314"/>
    <property type="project" value="BHF-UCL"/>
</dbReference>
<dbReference type="GO" id="GO:0141193">
    <property type="term" value="P:nuclear receptor-mediated signaling pathway"/>
    <property type="evidence" value="ECO:0000314"/>
    <property type="project" value="BHF-UCL"/>
</dbReference>
<dbReference type="GO" id="GO:0046473">
    <property type="term" value="P:phosphatidic acid metabolic process"/>
    <property type="evidence" value="ECO:0000314"/>
    <property type="project" value="UniProtKB"/>
</dbReference>
<dbReference type="GO" id="GO:0034638">
    <property type="term" value="P:phosphatidylcholine catabolic process"/>
    <property type="evidence" value="ECO:0000314"/>
    <property type="project" value="UniProtKB"/>
</dbReference>
<dbReference type="GO" id="GO:0046470">
    <property type="term" value="P:phosphatidylcholine metabolic process"/>
    <property type="evidence" value="ECO:0000314"/>
    <property type="project" value="UniProtKB"/>
</dbReference>
<dbReference type="GO" id="GO:0046337">
    <property type="term" value="P:phosphatidylethanolamine metabolic process"/>
    <property type="evidence" value="ECO:0000314"/>
    <property type="project" value="UniProtKB"/>
</dbReference>
<dbReference type="GO" id="GO:0046471">
    <property type="term" value="P:phosphatidylglycerol metabolic process"/>
    <property type="evidence" value="ECO:0000314"/>
    <property type="project" value="UniProtKB"/>
</dbReference>
<dbReference type="GO" id="GO:0006658">
    <property type="term" value="P:phosphatidylserine metabolic process"/>
    <property type="evidence" value="ECO:0000314"/>
    <property type="project" value="UniProtKB"/>
</dbReference>
<dbReference type="GO" id="GO:0062234">
    <property type="term" value="P:platelet activating factor catabolic process"/>
    <property type="evidence" value="ECO:0000314"/>
    <property type="project" value="UniProtKB"/>
</dbReference>
<dbReference type="GO" id="GO:2000344">
    <property type="term" value="P:positive regulation of acrosome reaction"/>
    <property type="evidence" value="ECO:0000250"/>
    <property type="project" value="UniProtKB"/>
</dbReference>
<dbReference type="GO" id="GO:0090238">
    <property type="term" value="P:positive regulation of arachidonate secretion"/>
    <property type="evidence" value="ECO:0000250"/>
    <property type="project" value="BHF-UCL"/>
</dbReference>
<dbReference type="GO" id="GO:0010884">
    <property type="term" value="P:positive regulation of lipid storage"/>
    <property type="evidence" value="ECO:0000315"/>
    <property type="project" value="BHF-UCL"/>
</dbReference>
<dbReference type="GO" id="GO:0010744">
    <property type="term" value="P:positive regulation of macrophage derived foam cell differentiation"/>
    <property type="evidence" value="ECO:0000305"/>
    <property type="project" value="BHF-UCL"/>
</dbReference>
<dbReference type="GO" id="GO:0032308">
    <property type="term" value="P:positive regulation of prostaglandin secretion"/>
    <property type="evidence" value="ECO:0000315"/>
    <property type="project" value="BHF-UCL"/>
</dbReference>
<dbReference type="GO" id="GO:0051247">
    <property type="term" value="P:positive regulation of protein metabolic process"/>
    <property type="evidence" value="ECO:0000315"/>
    <property type="project" value="BHF-UCL"/>
</dbReference>
<dbReference type="GO" id="GO:0002532">
    <property type="term" value="P:production of molecular mediator involved in inflammatory response"/>
    <property type="evidence" value="ECO:0007669"/>
    <property type="project" value="Ensembl"/>
</dbReference>
<dbReference type="GO" id="GO:0001516">
    <property type="term" value="P:prostaglandin biosynthetic process"/>
    <property type="evidence" value="ECO:0007669"/>
    <property type="project" value="Ensembl"/>
</dbReference>
<dbReference type="GO" id="GO:0043030">
    <property type="term" value="P:regulation of macrophage activation"/>
    <property type="evidence" value="ECO:0000315"/>
    <property type="project" value="BHF-UCL"/>
</dbReference>
<dbReference type="GO" id="GO:0023019">
    <property type="term" value="P:signal transduction involved in regulation of gene expression"/>
    <property type="evidence" value="ECO:0000314"/>
    <property type="project" value="BHF-UCL"/>
</dbReference>
<dbReference type="CDD" id="cd00125">
    <property type="entry name" value="PLA2c"/>
    <property type="match status" value="1"/>
</dbReference>
<dbReference type="FunFam" id="1.20.90.10:FF:000001">
    <property type="entry name" value="Basic phospholipase A2 homolog"/>
    <property type="match status" value="1"/>
</dbReference>
<dbReference type="Gene3D" id="1.20.90.10">
    <property type="entry name" value="Phospholipase A2 domain"/>
    <property type="match status" value="1"/>
</dbReference>
<dbReference type="InterPro" id="IPR001211">
    <property type="entry name" value="PLipase_A2"/>
</dbReference>
<dbReference type="InterPro" id="IPR033112">
    <property type="entry name" value="PLipase_A2_Asp_AS"/>
</dbReference>
<dbReference type="InterPro" id="IPR016090">
    <property type="entry name" value="PLipase_A2_dom"/>
</dbReference>
<dbReference type="InterPro" id="IPR036444">
    <property type="entry name" value="PLipase_A2_dom_sf"/>
</dbReference>
<dbReference type="InterPro" id="IPR033113">
    <property type="entry name" value="PLipase_A2_His_AS"/>
</dbReference>
<dbReference type="PANTHER" id="PTHR11716:SF4">
    <property type="entry name" value="GROUP 10 SECRETORY PHOSPHOLIPASE A2"/>
    <property type="match status" value="1"/>
</dbReference>
<dbReference type="PANTHER" id="PTHR11716">
    <property type="entry name" value="PHOSPHOLIPASE A2 FAMILY MEMBER"/>
    <property type="match status" value="1"/>
</dbReference>
<dbReference type="Pfam" id="PF00068">
    <property type="entry name" value="Phospholip_A2_1"/>
    <property type="match status" value="1"/>
</dbReference>
<dbReference type="PRINTS" id="PR00389">
    <property type="entry name" value="PHPHLIPASEA2"/>
</dbReference>
<dbReference type="SMART" id="SM00085">
    <property type="entry name" value="PA2c"/>
    <property type="match status" value="1"/>
</dbReference>
<dbReference type="SUPFAM" id="SSF48619">
    <property type="entry name" value="Phospholipase A2, PLA2"/>
    <property type="match status" value="1"/>
</dbReference>
<dbReference type="PROSITE" id="PS00119">
    <property type="entry name" value="PA2_ASP"/>
    <property type="match status" value="1"/>
</dbReference>
<dbReference type="PROSITE" id="PS00118">
    <property type="entry name" value="PA2_HIS"/>
    <property type="match status" value="1"/>
</dbReference>
<keyword id="KW-0002">3D-structure</keyword>
<keyword id="KW-0106">Calcium</keyword>
<keyword id="KW-0165">Cleavage on pair of basic residues</keyword>
<keyword id="KW-0968">Cytoplasmic vesicle</keyword>
<keyword id="KW-1015">Disulfide bond</keyword>
<keyword id="KW-0325">Glycoprotein</keyword>
<keyword id="KW-0378">Hydrolase</keyword>
<keyword id="KW-0443">Lipid metabolism</keyword>
<keyword id="KW-0458">Lysosome</keyword>
<keyword id="KW-0479">Metal-binding</keyword>
<keyword id="KW-1208">Phospholipid metabolism</keyword>
<keyword id="KW-1267">Proteomics identification</keyword>
<keyword id="KW-1185">Reference proteome</keyword>
<keyword id="KW-0964">Secreted</keyword>
<keyword id="KW-0732">Signal</keyword>
<sequence>MGPLPVCLPIMLLLLLPSLLLLLLLPGPGSGEASRILRVHRRGILELAGTVGCVGPRTPIAYMKYGCFCGLGGHGQPRDAIDWCCHGHDCCYTRAEEAGCSPKTERYSWQCVNQSVLCGPAENKCQELLCKCDQEIANCLAQTEYNLKYLFYPQFLCEPDSPKCD</sequence>
<reference key="1">
    <citation type="journal article" date="1997" name="J. Biol. Chem.">
        <title>Cloning, chromosomal mapping, and expression of a novel human secretory phospholipase A2.</title>
        <authorList>
            <person name="Cupillard L."/>
            <person name="Koumanov K."/>
            <person name="Mattei M.-G."/>
            <person name="Lazdunski M."/>
            <person name="Lambeau G."/>
        </authorList>
    </citation>
    <scope>NUCLEOTIDE SEQUENCE [MRNA]</scope>
    <scope>FUNCTION</scope>
    <scope>SUBCELLULAR LOCATION</scope>
    <scope>COFACTOR</scope>
    <scope>BIOPHYSICOCHEMICAL PROPERTIES</scope>
    <scope>TISSUE SPECIFICITY</scope>
    <source>
        <tissue>Lung</tissue>
    </source>
</reference>
<reference key="2">
    <citation type="submission" date="2004-06" db="EMBL/GenBank/DDBJ databases">
        <title>Cloning of human full open reading frames in Gateway(TM) system entry vector (pDONR201).</title>
        <authorList>
            <person name="Ebert L."/>
            <person name="Schick M."/>
            <person name="Neubert P."/>
            <person name="Schatten R."/>
            <person name="Henze S."/>
            <person name="Korn B."/>
        </authorList>
    </citation>
    <scope>NUCLEOTIDE SEQUENCE [LARGE SCALE MRNA]</scope>
</reference>
<reference key="3">
    <citation type="journal article" date="2004" name="Nature">
        <title>The sequence and analysis of duplication-rich human chromosome 16.</title>
        <authorList>
            <person name="Martin J."/>
            <person name="Han C."/>
            <person name="Gordon L.A."/>
            <person name="Terry A."/>
            <person name="Prabhakar S."/>
            <person name="She X."/>
            <person name="Xie G."/>
            <person name="Hellsten U."/>
            <person name="Chan Y.M."/>
            <person name="Altherr M."/>
            <person name="Couronne O."/>
            <person name="Aerts A."/>
            <person name="Bajorek E."/>
            <person name="Black S."/>
            <person name="Blumer H."/>
            <person name="Branscomb E."/>
            <person name="Brown N.C."/>
            <person name="Bruno W.J."/>
            <person name="Buckingham J.M."/>
            <person name="Callen D.F."/>
            <person name="Campbell C.S."/>
            <person name="Campbell M.L."/>
            <person name="Campbell E.W."/>
            <person name="Caoile C."/>
            <person name="Challacombe J.F."/>
            <person name="Chasteen L.A."/>
            <person name="Chertkov O."/>
            <person name="Chi H.C."/>
            <person name="Christensen M."/>
            <person name="Clark L.M."/>
            <person name="Cohn J.D."/>
            <person name="Denys M."/>
            <person name="Detter J.C."/>
            <person name="Dickson M."/>
            <person name="Dimitrijevic-Bussod M."/>
            <person name="Escobar J."/>
            <person name="Fawcett J.J."/>
            <person name="Flowers D."/>
            <person name="Fotopulos D."/>
            <person name="Glavina T."/>
            <person name="Gomez M."/>
            <person name="Gonzales E."/>
            <person name="Goodstein D."/>
            <person name="Goodwin L.A."/>
            <person name="Grady D.L."/>
            <person name="Grigoriev I."/>
            <person name="Groza M."/>
            <person name="Hammon N."/>
            <person name="Hawkins T."/>
            <person name="Haydu L."/>
            <person name="Hildebrand C.E."/>
            <person name="Huang W."/>
            <person name="Israni S."/>
            <person name="Jett J."/>
            <person name="Jewett P.B."/>
            <person name="Kadner K."/>
            <person name="Kimball H."/>
            <person name="Kobayashi A."/>
            <person name="Krawczyk M.-C."/>
            <person name="Leyba T."/>
            <person name="Longmire J.L."/>
            <person name="Lopez F."/>
            <person name="Lou Y."/>
            <person name="Lowry S."/>
            <person name="Ludeman T."/>
            <person name="Manohar C.F."/>
            <person name="Mark G.A."/>
            <person name="McMurray K.L."/>
            <person name="Meincke L.J."/>
            <person name="Morgan J."/>
            <person name="Moyzis R.K."/>
            <person name="Mundt M.O."/>
            <person name="Munk A.C."/>
            <person name="Nandkeshwar R.D."/>
            <person name="Pitluck S."/>
            <person name="Pollard M."/>
            <person name="Predki P."/>
            <person name="Parson-Quintana B."/>
            <person name="Ramirez L."/>
            <person name="Rash S."/>
            <person name="Retterer J."/>
            <person name="Ricke D.O."/>
            <person name="Robinson D.L."/>
            <person name="Rodriguez A."/>
            <person name="Salamov A."/>
            <person name="Saunders E.H."/>
            <person name="Scott D."/>
            <person name="Shough T."/>
            <person name="Stallings R.L."/>
            <person name="Stalvey M."/>
            <person name="Sutherland R.D."/>
            <person name="Tapia R."/>
            <person name="Tesmer J.G."/>
            <person name="Thayer N."/>
            <person name="Thompson L.S."/>
            <person name="Tice H."/>
            <person name="Torney D.C."/>
            <person name="Tran-Gyamfi M."/>
            <person name="Tsai M."/>
            <person name="Ulanovsky L.E."/>
            <person name="Ustaszewska A."/>
            <person name="Vo N."/>
            <person name="White P.S."/>
            <person name="Williams A.L."/>
            <person name="Wills P.L."/>
            <person name="Wu J.-R."/>
            <person name="Wu K."/>
            <person name="Yang J."/>
            <person name="DeJong P."/>
            <person name="Bruce D."/>
            <person name="Doggett N.A."/>
            <person name="Deaven L."/>
            <person name="Schmutz J."/>
            <person name="Grimwood J."/>
            <person name="Richardson P."/>
            <person name="Rokhsar D.S."/>
            <person name="Eichler E.E."/>
            <person name="Gilna P."/>
            <person name="Lucas S.M."/>
            <person name="Myers R.M."/>
            <person name="Rubin E.M."/>
            <person name="Pennacchio L.A."/>
        </authorList>
    </citation>
    <scope>NUCLEOTIDE SEQUENCE [LARGE SCALE GENOMIC DNA]</scope>
</reference>
<reference key="4">
    <citation type="submission" date="2005-09" db="EMBL/GenBank/DDBJ databases">
        <authorList>
            <person name="Mural R.J."/>
            <person name="Istrail S."/>
            <person name="Sutton G.G."/>
            <person name="Florea L."/>
            <person name="Halpern A.L."/>
            <person name="Mobarry C.M."/>
            <person name="Lippert R."/>
            <person name="Walenz B."/>
            <person name="Shatkay H."/>
            <person name="Dew I."/>
            <person name="Miller J.R."/>
            <person name="Flanigan M.J."/>
            <person name="Edwards N.J."/>
            <person name="Bolanos R."/>
            <person name="Fasulo D."/>
            <person name="Halldorsson B.V."/>
            <person name="Hannenhalli S."/>
            <person name="Turner R."/>
            <person name="Yooseph S."/>
            <person name="Lu F."/>
            <person name="Nusskern D.R."/>
            <person name="Shue B.C."/>
            <person name="Zheng X.H."/>
            <person name="Zhong F."/>
            <person name="Delcher A.L."/>
            <person name="Huson D.H."/>
            <person name="Kravitz S.A."/>
            <person name="Mouchard L."/>
            <person name="Reinert K."/>
            <person name="Remington K.A."/>
            <person name="Clark A.G."/>
            <person name="Waterman M.S."/>
            <person name="Eichler E.E."/>
            <person name="Adams M.D."/>
            <person name="Hunkapiller M.W."/>
            <person name="Myers E.W."/>
            <person name="Venter J.C."/>
        </authorList>
    </citation>
    <scope>NUCLEOTIDE SEQUENCE [LARGE SCALE GENOMIC DNA]</scope>
</reference>
<reference key="5">
    <citation type="journal article" date="2004" name="Genome Res.">
        <title>The status, quality, and expansion of the NIH full-length cDNA project: the Mammalian Gene Collection (MGC).</title>
        <authorList>
            <consortium name="The MGC Project Team"/>
        </authorList>
    </citation>
    <scope>NUCLEOTIDE SEQUENCE [LARGE SCALE MRNA]</scope>
</reference>
<reference key="6">
    <citation type="journal article" date="2002" name="J. Biol. Chem.">
        <title>Bactericidal properties of human and murine groups I, II, V, X, and XII secreted phospholipases A(2).</title>
        <authorList>
            <person name="Koduri R.S."/>
            <person name="Groenroos J.O."/>
            <person name="Laine V.J."/>
            <person name="Le Calvez C."/>
            <person name="Lambeau G."/>
            <person name="Nevalainen T.J."/>
            <person name="Gelb M.H."/>
        </authorList>
    </citation>
    <scope>FUNCTION</scope>
</reference>
<reference key="7">
    <citation type="journal article" date="2002" name="J. Biol. Chem.">
        <title>Potent modification of low density lipoprotein by group X secretory phospholipase A2 is linked to macrophage foam cell formation.</title>
        <authorList>
            <person name="Hanasaki K."/>
            <person name="Yamada K."/>
            <person name="Yamamoto S."/>
            <person name="Ishimoto Y."/>
            <person name="Saiga A."/>
            <person name="Ono T."/>
            <person name="Ikeda M."/>
            <person name="Notoya M."/>
            <person name="Kamitani S."/>
            <person name="Arita H."/>
        </authorList>
    </citation>
    <scope>FUNCTION</scope>
    <scope>CATALYTIC ACTIVITY</scope>
</reference>
<reference key="8">
    <citation type="journal article" date="2002" name="J. Biol. Chem.">
        <title>Interfacial kinetic and binding properties of the complete set of human and mouse groups I, II, V, X, and XII secreted phospholipases A2.</title>
        <authorList>
            <person name="Singer A.G."/>
            <person name="Ghomashchi F."/>
            <person name="Le Calvez C."/>
            <person name="Bollinger J."/>
            <person name="Bezzine S."/>
            <person name="Rouault M."/>
            <person name="Sadilek M."/>
            <person name="Nguyen E."/>
            <person name="Lazdunski M."/>
            <person name="Lambeau G."/>
            <person name="Gelb M.H."/>
        </authorList>
    </citation>
    <scope>FUNCTION</scope>
    <scope>CATALYTIC ACTIVITY</scope>
    <scope>ACTIVITY REGULATION</scope>
</reference>
<reference key="9">
    <citation type="journal article" date="2006" name="Biochim. Biophys. Acta">
        <title>The proinflammatory mediator Platelet Activating Factor is an effective substrate for human group X secreted phospholipase A2.</title>
        <authorList>
            <person name="Gora S."/>
            <person name="Lambeau G."/>
            <person name="Bollinger J.G."/>
            <person name="Gelb M."/>
            <person name="Ninio E."/>
            <person name="Karabina S.A."/>
        </authorList>
    </citation>
    <scope>FUNCTION</scope>
    <scope>CATALYTIC ACTIVITY</scope>
    <scope>MUTAGENESIS OF HIS-88</scope>
</reference>
<reference key="10">
    <citation type="journal article" date="2006" name="Biochem. J.">
        <title>Group V and X secretory phospholipase A2 prevents adenoviral infection in mammalian cells.</title>
        <authorList>
            <person name="Mitsuishi M."/>
            <person name="Masuda S."/>
            <person name="Kudo I."/>
            <person name="Murakami M."/>
        </authorList>
    </citation>
    <scope>FUNCTION</scope>
    <scope>CATALYTIC ACTIVITY</scope>
    <scope>MUTAGENESIS OF HIS-88</scope>
</reference>
<reference key="11">
    <citation type="journal article" date="2011" name="J. Biol. Chem.">
        <title>Physiological roles of group X-secreted phospholipase A2 in reproduction, gastrointestinal phospholipid digestion, and neuronal function.</title>
        <authorList>
            <person name="Sato H."/>
            <person name="Isogai Y."/>
            <person name="Masuda S."/>
            <person name="Taketomi Y."/>
            <person name="Miki Y."/>
            <person name="Kamei D."/>
            <person name="Hara S."/>
            <person name="Kobayashi T."/>
            <person name="Ishikawa Y."/>
            <person name="Ishii T."/>
            <person name="Ikeda K."/>
            <person name="Taguchi R."/>
            <person name="Ishimoto Y."/>
            <person name="Suzuki N."/>
            <person name="Yokota Y."/>
            <person name="Hanasaki K."/>
            <person name="Suzuki-Yamamoto T."/>
            <person name="Yamamoto K."/>
            <person name="Murakami M."/>
        </authorList>
    </citation>
    <scope>TISSUE SPECIFICITY</scope>
</reference>
<reference key="12">
    <citation type="journal article" date="2002" name="J. Biol. Chem.">
        <title>Crystal structure of human group X secreted phospholipase A2. Electrostatically neutral interfacial surface targets zwitterionic membranes.</title>
        <authorList>
            <person name="Pan Y.H."/>
            <person name="Yu B.Z."/>
            <person name="Singer A.G."/>
            <person name="Ghomashchi F."/>
            <person name="Lambeau G."/>
            <person name="Gelb M.H."/>
            <person name="Jain M.K."/>
            <person name="Bahnson B.J."/>
        </authorList>
    </citation>
    <scope>X-RAY CRYSTALLOGRAPHY (1.97 ANGSTROMS) OF 43-165</scope>
    <scope>DISULFIDE BONDS</scope>
    <scope>ACTIVE SITE</scope>
    <scope>COFACTOR</scope>
    <scope>CALCIUM-BINDING SITES</scope>
</reference>
<name>PA2GX_HUMAN</name>